<organism>
    <name type="scientific">Oomycete-like sp. (strain MacKay2000)</name>
    <dbReference type="NCBI Taxonomy" id="129195"/>
    <lineage>
        <taxon>Eukaryota</taxon>
        <taxon>Sar</taxon>
        <taxon>Stramenopiles</taxon>
    </lineage>
</organism>
<sequence length="451" mass="50367">MREIVHIQGGQCGDQIGAKFWEVISDEHGIDPTGTYNGDSDLQLERVNVYYNEATGGRYVPRAVLMDLEPGTMDSVRAGPYGQLFRPDNFVFGQTGAGNNWAKGHYTEGAELIDSVLDVVRKEAEQCDCLQGFQVTHSLGGGTGSGMGTLLISKIREEYPDRVMMTFSVCPSPKVSDTVVEPYNATLSVHQLVENADEVMVLDNEALYDICFRTLKLTTPTYGDLNHLVCVCMSGVTSSLRFPGQLNADLRKLAVNLIPFPRLHFFMLGFAPLTSRGSQQYRALTVPELTSQCFDAKNMMCAADPRHGRYLTASCMFRGRMSTKEVDEQMLNVQNKNSSYFVEWIPNNIKSSVCDIPPKGLKMSATFVGNSTAIQEMFKRVGEQFTAMFRRKAFLHWYTGEGMDEMEFTEAESNMNDLVSEYQQYQDATAEEEGEYDEDDGGYGDEDDGMM</sequence>
<dbReference type="EMBL" id="Z67994">
    <property type="protein sequence ID" value="CAA91942.1"/>
    <property type="molecule type" value="Genomic_DNA"/>
</dbReference>
<dbReference type="SMR" id="P50262"/>
<dbReference type="GO" id="GO:0005737">
    <property type="term" value="C:cytoplasm"/>
    <property type="evidence" value="ECO:0007669"/>
    <property type="project" value="UniProtKB-KW"/>
</dbReference>
<dbReference type="GO" id="GO:0005874">
    <property type="term" value="C:microtubule"/>
    <property type="evidence" value="ECO:0007669"/>
    <property type="project" value="UniProtKB-KW"/>
</dbReference>
<dbReference type="GO" id="GO:0005525">
    <property type="term" value="F:GTP binding"/>
    <property type="evidence" value="ECO:0007669"/>
    <property type="project" value="UniProtKB-KW"/>
</dbReference>
<dbReference type="GO" id="GO:0003924">
    <property type="term" value="F:GTPase activity"/>
    <property type="evidence" value="ECO:0007669"/>
    <property type="project" value="InterPro"/>
</dbReference>
<dbReference type="GO" id="GO:0046872">
    <property type="term" value="F:metal ion binding"/>
    <property type="evidence" value="ECO:0007669"/>
    <property type="project" value="UniProtKB-KW"/>
</dbReference>
<dbReference type="GO" id="GO:0005200">
    <property type="term" value="F:structural constituent of cytoskeleton"/>
    <property type="evidence" value="ECO:0007669"/>
    <property type="project" value="InterPro"/>
</dbReference>
<dbReference type="GO" id="GO:0007017">
    <property type="term" value="P:microtubule-based process"/>
    <property type="evidence" value="ECO:0007669"/>
    <property type="project" value="InterPro"/>
</dbReference>
<dbReference type="CDD" id="cd02187">
    <property type="entry name" value="beta_tubulin"/>
    <property type="match status" value="1"/>
</dbReference>
<dbReference type="FunFam" id="1.10.287.600:FF:000002">
    <property type="entry name" value="Tubulin beta chain"/>
    <property type="match status" value="1"/>
</dbReference>
<dbReference type="FunFam" id="3.30.1330.20:FF:000002">
    <property type="entry name" value="Tubulin beta chain"/>
    <property type="match status" value="1"/>
</dbReference>
<dbReference type="FunFam" id="3.40.50.1440:FF:000005">
    <property type="entry name" value="Tubulin beta chain"/>
    <property type="match status" value="1"/>
</dbReference>
<dbReference type="Gene3D" id="1.10.287.600">
    <property type="entry name" value="Helix hairpin bin"/>
    <property type="match status" value="1"/>
</dbReference>
<dbReference type="Gene3D" id="3.30.1330.20">
    <property type="entry name" value="Tubulin/FtsZ, C-terminal domain"/>
    <property type="match status" value="1"/>
</dbReference>
<dbReference type="Gene3D" id="3.40.50.1440">
    <property type="entry name" value="Tubulin/FtsZ, GTPase domain"/>
    <property type="match status" value="1"/>
</dbReference>
<dbReference type="InterPro" id="IPR013838">
    <property type="entry name" value="Beta-tubulin_BS"/>
</dbReference>
<dbReference type="InterPro" id="IPR002453">
    <property type="entry name" value="Beta_tubulin"/>
</dbReference>
<dbReference type="InterPro" id="IPR008280">
    <property type="entry name" value="Tub_FtsZ_C"/>
</dbReference>
<dbReference type="InterPro" id="IPR000217">
    <property type="entry name" value="Tubulin"/>
</dbReference>
<dbReference type="InterPro" id="IPR037103">
    <property type="entry name" value="Tubulin/FtsZ-like_C"/>
</dbReference>
<dbReference type="InterPro" id="IPR018316">
    <property type="entry name" value="Tubulin/FtsZ_2-layer-sand-dom"/>
</dbReference>
<dbReference type="InterPro" id="IPR036525">
    <property type="entry name" value="Tubulin/FtsZ_GTPase_sf"/>
</dbReference>
<dbReference type="InterPro" id="IPR023123">
    <property type="entry name" value="Tubulin_C"/>
</dbReference>
<dbReference type="InterPro" id="IPR017975">
    <property type="entry name" value="Tubulin_CS"/>
</dbReference>
<dbReference type="InterPro" id="IPR003008">
    <property type="entry name" value="Tubulin_FtsZ_GTPase"/>
</dbReference>
<dbReference type="PANTHER" id="PTHR11588">
    <property type="entry name" value="TUBULIN"/>
    <property type="match status" value="1"/>
</dbReference>
<dbReference type="Pfam" id="PF00091">
    <property type="entry name" value="Tubulin"/>
    <property type="match status" value="1"/>
</dbReference>
<dbReference type="Pfam" id="PF03953">
    <property type="entry name" value="Tubulin_C"/>
    <property type="match status" value="1"/>
</dbReference>
<dbReference type="PRINTS" id="PR01163">
    <property type="entry name" value="BETATUBULIN"/>
</dbReference>
<dbReference type="PRINTS" id="PR01161">
    <property type="entry name" value="TUBULIN"/>
</dbReference>
<dbReference type="SMART" id="SM00864">
    <property type="entry name" value="Tubulin"/>
    <property type="match status" value="1"/>
</dbReference>
<dbReference type="SMART" id="SM00865">
    <property type="entry name" value="Tubulin_C"/>
    <property type="match status" value="1"/>
</dbReference>
<dbReference type="SUPFAM" id="SSF55307">
    <property type="entry name" value="Tubulin C-terminal domain-like"/>
    <property type="match status" value="1"/>
</dbReference>
<dbReference type="SUPFAM" id="SSF52490">
    <property type="entry name" value="Tubulin nucleotide-binding domain-like"/>
    <property type="match status" value="1"/>
</dbReference>
<dbReference type="PROSITE" id="PS00227">
    <property type="entry name" value="TUBULIN"/>
    <property type="match status" value="1"/>
</dbReference>
<dbReference type="PROSITE" id="PS00228">
    <property type="entry name" value="TUBULIN_B_AUTOREG"/>
    <property type="match status" value="1"/>
</dbReference>
<reference key="1">
    <citation type="submission" date="1995-11" db="EMBL/GenBank/DDBJ databases">
        <title>Expression of beta-tubulin genes in the sporophyte and gametophyte of the red alga Porphyra purpurea.</title>
        <authorList>
            <person name="Mackay R.M."/>
            <person name="Gallant J.W."/>
        </authorList>
    </citation>
    <scope>NUCLEOTIDE SEQUENCE [GENOMIC DNA]</scope>
</reference>
<reference key="2">
    <citation type="journal article" date="1998" name="J. Eukaryot. Microbiol.">
        <title>The phylogenetic position of alpha- and beta-tubulins from the Chlorarachnion host and Cercomonas (Cercozoa).</title>
        <authorList>
            <person name="Keeling P.J."/>
            <person name="Deane J.A."/>
            <person name="McFadden G.I."/>
        </authorList>
    </citation>
    <scope>REVISES SPECIES OF ORIGIN</scope>
</reference>
<proteinExistence type="inferred from homology"/>
<protein>
    <recommendedName>
        <fullName>Tubulin beta-4 chain</fullName>
    </recommendedName>
    <alternativeName>
        <fullName>Beta-4-tubulin</fullName>
    </alternativeName>
</protein>
<feature type="chain" id="PRO_0000048378" description="Tubulin beta-4 chain">
    <location>
        <begin position="1"/>
        <end position="451"/>
    </location>
</feature>
<feature type="region of interest" description="Disordered" evidence="3">
    <location>
        <begin position="417"/>
        <end position="451"/>
    </location>
</feature>
<feature type="compositionally biased region" description="Polar residues" evidence="3">
    <location>
        <begin position="417"/>
        <end position="427"/>
    </location>
</feature>
<feature type="compositionally biased region" description="Acidic residues" evidence="3">
    <location>
        <begin position="429"/>
        <end position="451"/>
    </location>
</feature>
<feature type="binding site" evidence="2">
    <location>
        <position position="11"/>
    </location>
    <ligand>
        <name>GTP</name>
        <dbReference type="ChEBI" id="CHEBI:37565"/>
    </ligand>
</feature>
<feature type="binding site" evidence="1">
    <location>
        <position position="69"/>
    </location>
    <ligand>
        <name>GTP</name>
        <dbReference type="ChEBI" id="CHEBI:37565"/>
    </ligand>
</feature>
<feature type="binding site" evidence="1">
    <location>
        <position position="69"/>
    </location>
    <ligand>
        <name>Mg(2+)</name>
        <dbReference type="ChEBI" id="CHEBI:18420"/>
    </ligand>
</feature>
<feature type="binding site" evidence="2">
    <location>
        <position position="138"/>
    </location>
    <ligand>
        <name>GTP</name>
        <dbReference type="ChEBI" id="CHEBI:37565"/>
    </ligand>
</feature>
<feature type="binding site" evidence="2">
    <location>
        <position position="142"/>
    </location>
    <ligand>
        <name>GTP</name>
        <dbReference type="ChEBI" id="CHEBI:37565"/>
    </ligand>
</feature>
<feature type="binding site" evidence="2">
    <location>
        <position position="143"/>
    </location>
    <ligand>
        <name>GTP</name>
        <dbReference type="ChEBI" id="CHEBI:37565"/>
    </ligand>
</feature>
<feature type="binding site" evidence="2">
    <location>
        <position position="144"/>
    </location>
    <ligand>
        <name>GTP</name>
        <dbReference type="ChEBI" id="CHEBI:37565"/>
    </ligand>
</feature>
<feature type="binding site" evidence="2">
    <location>
        <position position="204"/>
    </location>
    <ligand>
        <name>GTP</name>
        <dbReference type="ChEBI" id="CHEBI:37565"/>
    </ligand>
</feature>
<feature type="binding site" evidence="2">
    <location>
        <position position="226"/>
    </location>
    <ligand>
        <name>GTP</name>
        <dbReference type="ChEBI" id="CHEBI:37565"/>
    </ligand>
</feature>
<gene>
    <name type="primary">TUBB4</name>
</gene>
<accession>P50262</accession>
<comment type="function">
    <text>Tubulin is the major constituent of microtubules, a cylinder consisting of laterally associated linear protofilaments composed of alpha- and beta-tubulin heterodimers. Microtubules grow by the addition of GTP-tubulin dimers to the microtubule end, where a stabilizing cap forms. Below the cap, tubulin dimers are in GDP-bound state, owing to GTPase activity of alpha-tubulin.</text>
</comment>
<comment type="cofactor">
    <cofactor evidence="1">
        <name>Mg(2+)</name>
        <dbReference type="ChEBI" id="CHEBI:18420"/>
    </cofactor>
</comment>
<comment type="subunit">
    <text>Dimer of alpha and beta chains. A typical microtubule is a hollow water-filled tube with an outer diameter of 25 nm and an inner diameter of 15 nM. Alpha-beta heterodimers associate head-to-tail to form protofilaments running lengthwise along the microtubule wall with the beta-tubulin subunit facing the microtubule plus end conferring a structural polarity. Microtubules usually have 13 protofilaments but different protofilament numbers can be found in some organisms and specialized cells.</text>
</comment>
<comment type="subcellular location">
    <subcellularLocation>
        <location>Cytoplasm</location>
        <location>Cytoskeleton</location>
    </subcellularLocation>
</comment>
<comment type="similarity">
    <text evidence="4">Belongs to the tubulin family.</text>
</comment>
<comment type="caution">
    <text evidence="4">Was originally (Ref.1) thought to originate from Porphyra purpurea.</text>
</comment>
<evidence type="ECO:0000250" key="1">
    <source>
        <dbReference type="UniProtKB" id="P68363"/>
    </source>
</evidence>
<evidence type="ECO:0000250" key="2">
    <source>
        <dbReference type="UniProtKB" id="Q13509"/>
    </source>
</evidence>
<evidence type="ECO:0000256" key="3">
    <source>
        <dbReference type="SAM" id="MobiDB-lite"/>
    </source>
</evidence>
<evidence type="ECO:0000305" key="4"/>
<name>TBB4_OOMCK</name>
<keyword id="KW-0963">Cytoplasm</keyword>
<keyword id="KW-0206">Cytoskeleton</keyword>
<keyword id="KW-0342">GTP-binding</keyword>
<keyword id="KW-0460">Magnesium</keyword>
<keyword id="KW-0479">Metal-binding</keyword>
<keyword id="KW-0493">Microtubule</keyword>
<keyword id="KW-0547">Nucleotide-binding</keyword>